<feature type="chain" id="PRO_0000103361" description="DNA polymerase III subunit alpha">
    <location>
        <begin position="1"/>
        <end position="1174"/>
    </location>
</feature>
<gene>
    <name type="primary">dnaE</name>
    <name type="ordered locus">YPMT1.89/YPMT1.56c</name>
    <name type="ordered locus">Y1106</name>
</gene>
<name>DPO3A_YERPE</name>
<dbReference type="EC" id="2.7.7.7"/>
<dbReference type="EMBL" id="AF074611">
    <property type="protein sequence ID" value="AAC82764.1"/>
    <property type="molecule type" value="Genomic_DNA"/>
</dbReference>
<dbReference type="EMBL" id="AL117211">
    <property type="status" value="NOT_ANNOTATED_CDS"/>
    <property type="molecule type" value="Genomic_DNA"/>
</dbReference>
<dbReference type="EMBL" id="AF053947">
    <property type="protein sequence ID" value="AAC13215.1"/>
    <property type="molecule type" value="Genomic_DNA"/>
</dbReference>
<dbReference type="PIR" id="T14699">
    <property type="entry name" value="T14699"/>
</dbReference>
<dbReference type="PIR" id="T15021">
    <property type="entry name" value="T15021"/>
</dbReference>
<dbReference type="RefSeq" id="NP_857689.3">
    <property type="nucleotide sequence ID" value="NC_004835.1"/>
</dbReference>
<dbReference type="RefSeq" id="WP_002221186.1">
    <property type="nucleotide sequence ID" value="NZ_WUCM01000058.1"/>
</dbReference>
<dbReference type="RefSeq" id="YP_093946.1">
    <property type="nucleotide sequence ID" value="NC_006323.1"/>
</dbReference>
<dbReference type="SMR" id="O68770"/>
<dbReference type="KEGG" id="ypk:Y1106.pl"/>
<dbReference type="HOGENOM" id="CLU_001600_0_1_6"/>
<dbReference type="OMA" id="DKRACAC"/>
<dbReference type="Proteomes" id="UP000000815">
    <property type="component" value="Plasmid pMT1"/>
</dbReference>
<dbReference type="Proteomes" id="UP000002490">
    <property type="component" value="Plasmid pMT-1"/>
</dbReference>
<dbReference type="GO" id="GO:0005737">
    <property type="term" value="C:cytoplasm"/>
    <property type="evidence" value="ECO:0007669"/>
    <property type="project" value="UniProtKB-SubCell"/>
</dbReference>
<dbReference type="GO" id="GO:0008408">
    <property type="term" value="F:3'-5' exonuclease activity"/>
    <property type="evidence" value="ECO:0007669"/>
    <property type="project" value="InterPro"/>
</dbReference>
<dbReference type="GO" id="GO:0003887">
    <property type="term" value="F:DNA-directed DNA polymerase activity"/>
    <property type="evidence" value="ECO:0000318"/>
    <property type="project" value="GO_Central"/>
</dbReference>
<dbReference type="GO" id="GO:0006260">
    <property type="term" value="P:DNA replication"/>
    <property type="evidence" value="ECO:0007669"/>
    <property type="project" value="UniProtKB-KW"/>
</dbReference>
<dbReference type="CDD" id="cd07431">
    <property type="entry name" value="PHP_PolIIIA"/>
    <property type="match status" value="1"/>
</dbReference>
<dbReference type="Gene3D" id="1.10.150.870">
    <property type="match status" value="1"/>
</dbReference>
<dbReference type="Gene3D" id="3.20.20.140">
    <property type="entry name" value="Metal-dependent hydrolases"/>
    <property type="match status" value="1"/>
</dbReference>
<dbReference type="Gene3D" id="3.40.470.10">
    <property type="entry name" value="Uracil-DNA glycosylase-like domain"/>
    <property type="match status" value="1"/>
</dbReference>
<dbReference type="InterPro" id="IPR011708">
    <property type="entry name" value="DNA_pol3_alpha_NTPase_dom"/>
</dbReference>
<dbReference type="InterPro" id="IPR040982">
    <property type="entry name" value="DNA_pol3_finger"/>
</dbReference>
<dbReference type="InterPro" id="IPR004805">
    <property type="entry name" value="DnaE2/DnaE/PolC"/>
</dbReference>
<dbReference type="InterPro" id="IPR029460">
    <property type="entry name" value="DNAPol_HHH"/>
</dbReference>
<dbReference type="InterPro" id="IPR004013">
    <property type="entry name" value="PHP_dom"/>
</dbReference>
<dbReference type="InterPro" id="IPR003141">
    <property type="entry name" value="Pol/His_phosphatase_N"/>
</dbReference>
<dbReference type="InterPro" id="IPR036895">
    <property type="entry name" value="Uracil-DNA_glycosylase-like_sf"/>
</dbReference>
<dbReference type="NCBIfam" id="TIGR00594">
    <property type="entry name" value="polc"/>
    <property type="match status" value="1"/>
</dbReference>
<dbReference type="PANTHER" id="PTHR32294">
    <property type="entry name" value="DNA POLYMERASE III SUBUNIT ALPHA"/>
    <property type="match status" value="1"/>
</dbReference>
<dbReference type="PANTHER" id="PTHR32294:SF0">
    <property type="entry name" value="DNA POLYMERASE III SUBUNIT ALPHA"/>
    <property type="match status" value="1"/>
</dbReference>
<dbReference type="Pfam" id="PF07733">
    <property type="entry name" value="DNA_pol3_alpha"/>
    <property type="match status" value="1"/>
</dbReference>
<dbReference type="Pfam" id="PF17657">
    <property type="entry name" value="DNA_pol3_finger"/>
    <property type="match status" value="1"/>
</dbReference>
<dbReference type="Pfam" id="PF14579">
    <property type="entry name" value="HHH_6"/>
    <property type="match status" value="1"/>
</dbReference>
<dbReference type="Pfam" id="PF02811">
    <property type="entry name" value="PHP"/>
    <property type="match status" value="1"/>
</dbReference>
<dbReference type="SMART" id="SM00481">
    <property type="entry name" value="POLIIIAc"/>
    <property type="match status" value="1"/>
</dbReference>
<dbReference type="SUPFAM" id="SSF52141">
    <property type="entry name" value="Uracil-DNA glycosylase-like"/>
    <property type="match status" value="1"/>
</dbReference>
<evidence type="ECO:0000250" key="1"/>
<evidence type="ECO:0000305" key="2"/>
<protein>
    <recommendedName>
        <fullName>DNA polymerase III subunit alpha</fullName>
        <ecNumber>2.7.7.7</ecNumber>
    </recommendedName>
</protein>
<geneLocation type="plasmid">
    <name>pMT1</name>
    <name>pMT-1</name>
</geneLocation>
<keyword id="KW-0963">Cytoplasm</keyword>
<keyword id="KW-0235">DNA replication</keyword>
<keyword id="KW-0239">DNA-directed DNA polymerase</keyword>
<keyword id="KW-0548">Nucleotidyltransferase</keyword>
<keyword id="KW-0614">Plasmid</keyword>
<keyword id="KW-1185">Reference proteome</keyword>
<keyword id="KW-0808">Transferase</keyword>
<proteinExistence type="inferred from homology"/>
<organism>
    <name type="scientific">Yersinia pestis</name>
    <dbReference type="NCBI Taxonomy" id="632"/>
    <lineage>
        <taxon>Bacteria</taxon>
        <taxon>Pseudomonadati</taxon>
        <taxon>Pseudomonadota</taxon>
        <taxon>Gammaproteobacteria</taxon>
        <taxon>Enterobacterales</taxon>
        <taxon>Yersiniaceae</taxon>
        <taxon>Yersinia</taxon>
    </lineage>
</organism>
<reference key="1">
    <citation type="journal article" date="1998" name="Infect. Immun.">
        <title>Complete DNA sequence and detailed analysis of the Yersinia pestis KIM5 plasmid encoding murine toxin and capsular antigen.</title>
        <authorList>
            <person name="Lindler L.E."/>
            <person name="Plano G.V."/>
            <person name="Burland V."/>
            <person name="Mayhew G.F."/>
            <person name="Blattner F.R."/>
        </authorList>
    </citation>
    <scope>NUCLEOTIDE SEQUENCE [LARGE SCALE GENOMIC DNA]</scope>
    <source>
        <strain>KIM10+ / Biovar Mediaevalis</strain>
    </source>
</reference>
<reference key="2">
    <citation type="journal article" date="2001" name="Nature">
        <title>Genome sequence of Yersinia pestis, the causative agent of plague.</title>
        <authorList>
            <person name="Parkhill J."/>
            <person name="Wren B.W."/>
            <person name="Thomson N.R."/>
            <person name="Titball R.W."/>
            <person name="Holden M.T.G."/>
            <person name="Prentice M.B."/>
            <person name="Sebaihia M."/>
            <person name="James K.D."/>
            <person name="Churcher C.M."/>
            <person name="Mungall K.L."/>
            <person name="Baker S."/>
            <person name="Basham D."/>
            <person name="Bentley S.D."/>
            <person name="Brooks K."/>
            <person name="Cerdeno-Tarraga A.-M."/>
            <person name="Chillingworth T."/>
            <person name="Cronin A."/>
            <person name="Davies R.M."/>
            <person name="Davis P."/>
            <person name="Dougan G."/>
            <person name="Feltwell T."/>
            <person name="Hamlin N."/>
            <person name="Holroyd S."/>
            <person name="Jagels K."/>
            <person name="Karlyshev A.V."/>
            <person name="Leather S."/>
            <person name="Moule S."/>
            <person name="Oyston P.C.F."/>
            <person name="Quail M.A."/>
            <person name="Rutherford K.M."/>
            <person name="Simmonds M."/>
            <person name="Skelton J."/>
            <person name="Stevens K."/>
            <person name="Whitehead S."/>
            <person name="Barrell B.G."/>
        </authorList>
    </citation>
    <scope>NUCLEOTIDE SEQUENCE [LARGE SCALE GENOMIC DNA]</scope>
    <source>
        <strain>CO-92 / Biovar Orientalis</strain>
    </source>
</reference>
<reference key="3">
    <citation type="journal article" date="1998" name="J. Bacteriol.">
        <title>Structural organization of virulence-associated plasmids of Yersinia pestis.</title>
        <authorList>
            <person name="Hu P."/>
            <person name="Elliott J."/>
            <person name="McCready P."/>
            <person name="Skowronski E."/>
            <person name="Garnes J."/>
            <person name="Kobayashi A."/>
            <person name="Brubaker R.R."/>
            <person name="Garcia E."/>
        </authorList>
    </citation>
    <scope>NUCLEOTIDE SEQUENCE [GENOMIC DNA] OF 40-1174</scope>
    <source>
        <strain>KIM5 / Biovar Mediaevalis</strain>
    </source>
</reference>
<sequence length="1174" mass="130370">MKALMVRTDFSLGESALKAENAVKIARDAGYTAVISADSMNIASVIPLQRAAGDDMAVICGVKLNVVDDPTYEHRARLAKESERCMESLVRDRSYCFTALIKNEQGYRDVCELMTLANKREQFYFVPRLALDQLAAAYAKGNIILLTSDIGSVFQRRDFAKIIGTLVTAGGRDNFYSVVYPHPTPFYDQINVRAMKVASALKIEPVAFYPAYYEAVDDADIKDIAHMVTNNIKIDQPHRLRIPHQRDNAVNGRRHLLEALKAFSVRMDVPVTAAMASTTQDTIIEACTWRWHELPPALPKMADDEPATLMKLAVAGLRKRLTTKEFGYTPPASEHRVYVDRLKYEMDTLTRLGFCGYFLMVRDLMNHSRETGIPVGPGRGSSAGSLVAWCIGITNVDPIRHGLLFERFINPERLDLPDADLDFSQARRHEVIEYLNERYGEDYVAGIPNFTYLGAASALRDTARIYGVDAADMAVSKEFKNLEDDSLSLEELREQLASLDKYATKYPEAFKAACKLQSLMRGFGRHAAGMIVAGVPLVERTPVELRGNARCIAFDKRYCEAMGLIKLDVLGLATLDLLDSAKRYIKESTGEDINLDAIPLDDRKVLDGFAAGYTQGVFQLESGPMRKLLKDLGGGIEPMSFKTVVATTALFRPGPIQSGMLDDYVSVAKGFMAPQSLHPVLDELTAETNGVILYQEQTMNATRLLAGFTMAEADGVRKAIGKKDMEKMKSMGEKFVVQAQAGWIDVEMEDGTTQRIHRAEHFKCEDGALRTVEEALEAGVKLPMAAVRVTGSQPGLSETKAKEIWDAFEKNGAYQFNKSHPVAYSLISYQSMWLKTHYPAEFFAAALTILGEDKHQGLVKDALTYGIHVLPPDVNVSSNRIEIRTLEDGSQVLYAPFSAVKGCSENGCQAIMRAREKVGGKFESLEQFEEAVEKRACACNSRVRESLQKVGAFASIEPGSLPATDPERLRDQAELMGNLVIDAVKASRPFEMNPKRSAEVNVLMTRMAAEMGLGDDLIRPSIGIKPKIMVILDNANGNDGRTGYFMENGYDDFKAKLLTAGDLRMGDLYVTGVCKKVKDKEKDYTKDEIGQFTDFMREEINLVRPTYVLTCGSRATSLFNNKSKPSDLVGRKEYLPELDVTVFYGFNPNILYFRPEEGEKLEAILAEVAETISK</sequence>
<comment type="function">
    <text evidence="1">DNA polymerase III is a complex, multichain enzyme responsible for most of the replicative synthesis in bacteria. This DNA polymerase also exhibits 3' to 5' exonuclease activity. The alpha chain is the DNA polymerase (By similarity).</text>
</comment>
<comment type="catalytic activity">
    <reaction>
        <text>DNA(n) + a 2'-deoxyribonucleoside 5'-triphosphate = DNA(n+1) + diphosphate</text>
        <dbReference type="Rhea" id="RHEA:22508"/>
        <dbReference type="Rhea" id="RHEA-COMP:17339"/>
        <dbReference type="Rhea" id="RHEA-COMP:17340"/>
        <dbReference type="ChEBI" id="CHEBI:33019"/>
        <dbReference type="ChEBI" id="CHEBI:61560"/>
        <dbReference type="ChEBI" id="CHEBI:173112"/>
        <dbReference type="EC" id="2.7.7.7"/>
    </reaction>
</comment>
<comment type="subunit">
    <text evidence="1">DNA polymerase III contains a core (composed of alpha, epsilon and theta chains) that associates with a tau subunit. This core dimerizes to form the PolIII' complex. PolIII' associates with the gamma complex (composed of gamma, delta, delta', psi and chi chains) and with the beta chain to form the complete DNA polymerase III complex (By similarity).</text>
</comment>
<comment type="subcellular location">
    <subcellularLocation>
        <location evidence="1">Cytoplasm</location>
    </subcellularLocation>
</comment>
<comment type="similarity">
    <text evidence="2">Belongs to the DNA polymerase type-C family. DnaE subfamily.</text>
</comment>
<comment type="caution">
    <text evidence="2">In strain CO-92 it seems to be a pseudogene which is encoded in two separate ORFs on the plasmid.</text>
</comment>
<accession>O68770</accession>